<organismHost>
    <name type="scientific">Homo sapiens</name>
    <name type="common">Human</name>
    <dbReference type="NCBI Taxonomy" id="9606"/>
</organismHost>
<evidence type="ECO:0000255" key="1">
    <source>
        <dbReference type="HAMAP-Rule" id="MF_04044"/>
    </source>
</evidence>
<evidence type="ECO:0000256" key="2">
    <source>
        <dbReference type="SAM" id="MobiDB-lite"/>
    </source>
</evidence>
<evidence type="ECO:0000305" key="3"/>
<sequence length="2077" mass="239947">MKIITSSTNQNDSKYGPRAGKQCMSNSFSFLHTVYLNGINNSLNAGTIDAIMEEGYHLDTAGTLALMLNNSDSQDYRLPTEIPKRIHSRYGVTQHELSRPFNGTLDTQKIDNEVYLGLIDFILYGKSKNGPTFAVITIGVLSRALFFLNNTLYLFDSHPTEREATAAIYICQNIEEVYELLTTHGTEGFYYDASLIFFIETSNLSLSSHDAELLILKTYKDPDIAIALDKFSSTEIHEIKKTDDIGSQQDLVADKTTDLEHAPHKRKKNSHSLELELNDKKKKDTASLTYYATEVDLIPSFYELRSQFQSLFHDLKSFPIMKSNFNWTIYLQDSPINPNQPFATPFLWNRVFHLLCQIIDVFVGVGSTNDDSSKQQQQTIFINYLLPFKDFSEVFNEALAACQENNLDIIFIYNNYLCKTTTFRTLERILLSKFLAIVDNDHKKHYEWVKSWTTQMFQGMPKKLDDIENYLKAYVDHNPVKHFHEFICLNKAEKYKVAVLLNEKRKEIQEAIEREKNSFAQLSNFIDKLGETPALPIESENVHKVHTSDITEGIVPRFITESIELPNISTLNNTQQISLDKQLNEKLTNTIHTLTNKFTKIVQDNYNNIAAGFMPVTELNCLFAYLVNLYFNIEVLKHSGLNINTVLLQEVEKLYDNTQFLRFGTSHFNINNLSNFTLSIRKMFVDFYNSQKPSDRASEILAAIESILADPSKNKTVVNIEMIKSQLEELGKMEISTTENKQTAAITKQILGDQELTPIYDFLHHLSAYNLPNTTTVKNLHLHFILEQRPDIAMTLHDKIQSILDIYVDDMLNDITVPEQTFSTVLFLVDLFPNSTEKTALFESVLTLRQLAKKCANLKTLDEFDDLAQFITTNSEQLQNMMRQHFGKKIPTLMGHIKFLYSQKIITTEEKNWIQRAKTVVITSPEELTAFLATAPTKHALQTCKPDLDKALQRHMEEQMKQTAENDKKHILTIRSTLEKRLTDILLILKDGQFSSLETMHLNLLETFLKQLQDNNVIIHFTHALLPVLKDIETTISKIISDVIEKILIKTPLNPEQMSKEEQKYTPLLSFLSKFKKTTFCTEDVKTEIEQVQKSITFLKKIATSTNKHTRLSHSIYGQELNLYEERITELRKETNKMKEQLSKEYALAEKKILLSSQDAKTDKIYLVLNTHTLKEIKNTQFKETAFAKALTVEVNNKENQLQELLNHFNAHLKAKMDQNHITKLSFDTKWTAFVSDSRLYIPDFINIKLQDFISDPFKVISQLMNKATNEMPYIQAEITLKWLTKLIHDINKFCLSAISEFGKEAIPFNYAALRDLEYQINTKYVEIENKVICNETVENTKNIPKLTKLLKQLDPKRVAGGQEQYQTLMNKILTSETSMQQTYEKEQLKKEYFEIVNNVASFKLAFNFPQQLQNVERLIEKFKSLPKSQPFEKFPQENDLLSDSLNTENYINGLRALLNFITAAQNYIQNTLLKQWAVFQQQNFIPIDYSVANVKPISDLYARLRIERERQVFYQVNSVFGTHLIVDDTGVPLQFHNIFNNAIVKFFSLNYKQINVPEDTPRLVSSQYKLLSVCKSFIMILQQFWENIITLDLGPYLRDGTQNFKRELIPIVNLKLFIYCITQAWTASEDSTVSTAFELPIKQFTLLILCSHPEYLYGCLSHSTDLVINSLAKSIDKNSLYNTFVVSHNPPEKPMHLMRNICIDTQLWQPAKLMKDTFQQTFFTQLCPKNEKFFIYLTAFLILPYKFMNYIWIQYKPAIFTQRSYQNLIKDLCSEYVHQNKITTSSVTPHEPDTIKSGERITSKITVHKAQNTPTLTRLQAQEYVFDYILYSFLTGYEMTFAMYIDIIEKTYLLCMRHLENVLHDKDFQSVLRARTFDIDYILKQSWTKNIVEHSLFSVQLDKIVSYLNHTNRATPNIPLILFNYDNEVVNVYLPPMSTNPKKVAFYIKNPFHFPVQEYEATNLISFHLYPKTTDILNQLPPNNTESTRPGKQTSETLTNKNLSEPKFKKPAVTGLMPKSQSIILSTDTNVPETSPDVKANTASAAIKDVTLAREKINEFSESINTTISKLKSMYL</sequence>
<reference key="1">
    <citation type="journal article" date="1994" name="J. Virol.">
        <title>Nucleotide sequence analysis of a 38.5-kilobase-pair region of the genome of human herpesvirus 6 encoding human cytomegalovirus immediate-early gene homologs and transactivating functions.</title>
        <authorList>
            <person name="Nicholas J."/>
            <person name="Martin M.E.D."/>
        </authorList>
    </citation>
    <scope>NUCLEOTIDE SEQUENCE [GENOMIC DNA]</scope>
</reference>
<reference key="2">
    <citation type="journal article" date="1995" name="Virology">
        <title>The DNA sequence of human herpesvirus-6: structure, coding content, and genome evolution.</title>
        <authorList>
            <person name="Gompels U.A."/>
            <person name="Nicholas J."/>
            <person name="Lawrence G.L."/>
            <person name="Jones M."/>
            <person name="Thomson B.J."/>
            <person name="Martin M.E.D."/>
            <person name="Efstathiou S."/>
            <person name="Craxton M.A."/>
            <person name="Macaulay H.A."/>
        </authorList>
    </citation>
    <scope>NUCLEOTIDE SEQUENCE [LARGE SCALE GENOMIC DNA]</scope>
</reference>
<comment type="function">
    <text evidence="1">Large tegument protein that plays multiple roles in the viral cycle. During viral entry, remains associated with the capsid while most of the tegument is detached and participates in the capsid transport toward the host nucleus. Plays a role in the routing of the capsid at the nuclear pore complex and subsequent uncoating. Within the host nucleus, acts as a deneddylase and promotes the degradation of nuclear CRLs (cullin-RING ubiquitin ligases) and thereby stabilizes nuclear CRL substrates, while cytoplasmic CRLs remain unaffected. These modifications prevent host cell cycle S-phase progression and create a favorable environment allowing efficient viral genome replication. Participates later in the secondary envelopment of capsids. Indeed, plays a linker role for the association of the outer viral tegument to the capsids together with the inner tegument protein.</text>
</comment>
<comment type="catalytic activity">
    <reaction evidence="1">
        <text>Thiol-dependent hydrolysis of ester, thioester, amide, peptide and isopeptide bonds formed by the C-terminal Gly of ubiquitin (a 76-residue protein attached to proteins as an intracellular targeting signal).</text>
        <dbReference type="EC" id="3.4.19.12"/>
    </reaction>
</comment>
<comment type="subunit">
    <text evidence="1">Interacts with host CUL1 and CUL4A; these interactions inhibit the E3 ligase activity of cullins. Interacts with inner tegument protein. Interacts with capsid vertex specific component CVC2. Interacts with the major capsid protein/MCP.</text>
</comment>
<comment type="subcellular location">
    <subcellularLocation>
        <location evidence="1">Virion tegument</location>
    </subcellularLocation>
    <subcellularLocation>
        <location evidence="1">Host cytoplasm</location>
    </subcellularLocation>
    <subcellularLocation>
        <location evidence="1">Host nucleus</location>
    </subcellularLocation>
    <text evidence="1">Tightly associated with the capsid.</text>
</comment>
<comment type="similarity">
    <text evidence="1">Belongs to the herpesviridae large tegument protein family.</text>
</comment>
<comment type="sequence caution" evidence="3">
    <conflict type="erroneous initiation">
        <sequence resource="EMBL-CDS" id="AAA16739"/>
    </conflict>
    <text>Extended N-terminus.</text>
</comment>
<keyword id="KW-1035">Host cytoplasm</keyword>
<keyword id="KW-1048">Host nucleus</keyword>
<keyword id="KW-0945">Host-virus interaction</keyword>
<keyword id="KW-0378">Hydrolase</keyword>
<keyword id="KW-1127">Modulation of host ubiquitin pathway by viral deubiquitinase</keyword>
<keyword id="KW-1130">Modulation of host ubiquitin pathway by virus</keyword>
<keyword id="KW-0645">Protease</keyword>
<keyword id="KW-1185">Reference proteome</keyword>
<keyword id="KW-0677">Repeat</keyword>
<keyword id="KW-0788">Thiol protease</keyword>
<keyword id="KW-0833">Ubl conjugation pathway</keyword>
<keyword id="KW-0946">Virion</keyword>
<keyword id="KW-0920">Virion tegument</keyword>
<accession>P52340</accession>
<accession>Q69055</accession>
<dbReference type="EC" id="3.4.19.12" evidence="1"/>
<dbReference type="EC" id="3.4.22.-" evidence="1"/>
<dbReference type="EMBL" id="L25528">
    <property type="protein sequence ID" value="AAA16739.1"/>
    <property type="status" value="ALT_INIT"/>
    <property type="molecule type" value="Genomic_DNA"/>
</dbReference>
<dbReference type="EMBL" id="X83413">
    <property type="protein sequence ID" value="CAA58411.1"/>
    <property type="molecule type" value="Genomic_DNA"/>
</dbReference>
<dbReference type="PIR" id="T09326">
    <property type="entry name" value="T09326"/>
</dbReference>
<dbReference type="RefSeq" id="NP_042924.1">
    <property type="nucleotide sequence ID" value="NC_001664.2"/>
</dbReference>
<dbReference type="SMR" id="P52340"/>
<dbReference type="GeneID" id="1487907"/>
<dbReference type="KEGG" id="vg:1487907"/>
<dbReference type="Proteomes" id="UP000009295">
    <property type="component" value="Segment"/>
</dbReference>
<dbReference type="GO" id="GO:0030430">
    <property type="term" value="C:host cell cytoplasm"/>
    <property type="evidence" value="ECO:0007669"/>
    <property type="project" value="UniProtKB-SubCell"/>
</dbReference>
<dbReference type="GO" id="GO:0042025">
    <property type="term" value="C:host cell nucleus"/>
    <property type="evidence" value="ECO:0007669"/>
    <property type="project" value="UniProtKB-SubCell"/>
</dbReference>
<dbReference type="GO" id="GO:0019033">
    <property type="term" value="C:viral tegument"/>
    <property type="evidence" value="ECO:0007669"/>
    <property type="project" value="UniProtKB-SubCell"/>
</dbReference>
<dbReference type="GO" id="GO:0004843">
    <property type="term" value="F:cysteine-type deubiquitinase activity"/>
    <property type="evidence" value="ECO:0007669"/>
    <property type="project" value="UniProtKB-EC"/>
</dbReference>
<dbReference type="GO" id="GO:0006508">
    <property type="term" value="P:proteolysis"/>
    <property type="evidence" value="ECO:0007669"/>
    <property type="project" value="UniProtKB-KW"/>
</dbReference>
<dbReference type="GO" id="GO:0039648">
    <property type="term" value="P:symbiont-mediated perturbation of host ubiquitin-like protein modification"/>
    <property type="evidence" value="ECO:0007669"/>
    <property type="project" value="UniProtKB-KW"/>
</dbReference>
<dbReference type="Gene3D" id="3.90.70.120">
    <property type="match status" value="1"/>
</dbReference>
<dbReference type="HAMAP" id="MF_04044">
    <property type="entry name" value="HSV_LTP"/>
    <property type="match status" value="1"/>
</dbReference>
<dbReference type="InterPro" id="IPR006928">
    <property type="entry name" value="Herpes_teg_USP"/>
</dbReference>
<dbReference type="InterPro" id="IPR034702">
    <property type="entry name" value="HSV_LTP"/>
</dbReference>
<dbReference type="InterPro" id="IPR038765">
    <property type="entry name" value="Papain-like_cys_pep_sf"/>
</dbReference>
<dbReference type="Pfam" id="PF04843">
    <property type="entry name" value="Herpes_teg_N"/>
    <property type="match status" value="1"/>
</dbReference>
<dbReference type="SUPFAM" id="SSF54001">
    <property type="entry name" value="Cysteine proteinases"/>
    <property type="match status" value="1"/>
</dbReference>
<dbReference type="PROSITE" id="PS51521">
    <property type="entry name" value="HTUSP"/>
    <property type="match status" value="1"/>
</dbReference>
<protein>
    <recommendedName>
        <fullName evidence="1">Large tegument protein deneddylase</fullName>
        <ecNumber evidence="1">3.4.19.12</ecNumber>
        <ecNumber evidence="1">3.4.22.-</ecNumber>
    </recommendedName>
</protein>
<proteinExistence type="inferred from homology"/>
<name>LTP_HHV6U</name>
<feature type="chain" id="PRO_0000116041" description="Large tegument protein deneddylase">
    <location>
        <begin position="1"/>
        <end position="2077"/>
    </location>
</feature>
<feature type="domain" description="Peptidase C76" evidence="1">
    <location>
        <begin position="3"/>
        <end position="221"/>
    </location>
</feature>
<feature type="region of interest" description="Deubiquitination activity" evidence="1">
    <location>
        <begin position="1"/>
        <end position="231"/>
    </location>
</feature>
<feature type="region of interest" description="Interaction with inner tegument protein" evidence="1">
    <location>
        <position position="287"/>
    </location>
</feature>
<feature type="region of interest" description="Disordered" evidence="2">
    <location>
        <begin position="1982"/>
        <end position="2004"/>
    </location>
</feature>
<feature type="active site" evidence="1">
    <location>
        <position position="23"/>
    </location>
</feature>
<feature type="active site" evidence="1">
    <location>
        <position position="156"/>
    </location>
</feature>
<feature type="active site" evidence="1">
    <location>
        <position position="158"/>
    </location>
</feature>
<feature type="site" description="Important for catalytic activity" evidence="1">
    <location>
        <position position="10"/>
    </location>
</feature>
<gene>
    <name type="primary">U31</name>
    <name type="synonym">HHRF1</name>
</gene>
<organism>
    <name type="scientific">Human herpesvirus 6A (strain Uganda-1102)</name>
    <name type="common">HHV-6 variant A</name>
    <name type="synonym">Human B lymphotropic virus</name>
    <dbReference type="NCBI Taxonomy" id="10370"/>
    <lineage>
        <taxon>Viruses</taxon>
        <taxon>Duplodnaviria</taxon>
        <taxon>Heunggongvirae</taxon>
        <taxon>Peploviricota</taxon>
        <taxon>Herviviricetes</taxon>
        <taxon>Herpesvirales</taxon>
        <taxon>Orthoherpesviridae</taxon>
        <taxon>Betaherpesvirinae</taxon>
        <taxon>Roseolovirus</taxon>
        <taxon>Roseolovirus humanbeta6a</taxon>
        <taxon>Human betaherpesvirus 6A</taxon>
    </lineage>
</organism>